<accession>A5GNA0</accession>
<evidence type="ECO:0000255" key="1">
    <source>
        <dbReference type="HAMAP-Rule" id="MF_00366"/>
    </source>
</evidence>
<sequence length="75" mass="8529">MLTAGVDHQDLAKRGESLIRQSSNRYLTTVRIAFRAKQRRFDDFDGLLEESSVKPVQRAIVELSDEQDQPDLLPG</sequence>
<protein>
    <recommendedName>
        <fullName evidence="1">DNA-directed RNA polymerase subunit omega</fullName>
        <shortName evidence="1">RNAP omega subunit</shortName>
        <ecNumber evidence="1">2.7.7.6</ecNumber>
    </recommendedName>
    <alternativeName>
        <fullName evidence="1">RNA polymerase omega subunit</fullName>
    </alternativeName>
    <alternativeName>
        <fullName evidence="1">Transcriptase subunit omega</fullName>
    </alternativeName>
</protein>
<organism>
    <name type="scientific">Synechococcus sp. (strain WH7803)</name>
    <dbReference type="NCBI Taxonomy" id="32051"/>
    <lineage>
        <taxon>Bacteria</taxon>
        <taxon>Bacillati</taxon>
        <taxon>Cyanobacteriota</taxon>
        <taxon>Cyanophyceae</taxon>
        <taxon>Synechococcales</taxon>
        <taxon>Synechococcaceae</taxon>
        <taxon>Synechococcus</taxon>
    </lineage>
</organism>
<feature type="chain" id="PRO_1000006031" description="DNA-directed RNA polymerase subunit omega">
    <location>
        <begin position="1"/>
        <end position="75"/>
    </location>
</feature>
<keyword id="KW-0240">DNA-directed RNA polymerase</keyword>
<keyword id="KW-0548">Nucleotidyltransferase</keyword>
<keyword id="KW-1185">Reference proteome</keyword>
<keyword id="KW-0804">Transcription</keyword>
<keyword id="KW-0808">Transferase</keyword>
<gene>
    <name evidence="1" type="primary">rpoZ</name>
    <name type="ordered locus">SynWH7803_1989</name>
</gene>
<dbReference type="EC" id="2.7.7.6" evidence="1"/>
<dbReference type="EMBL" id="CT971583">
    <property type="protein sequence ID" value="CAK24415.1"/>
    <property type="molecule type" value="Genomic_DNA"/>
</dbReference>
<dbReference type="SMR" id="A5GNA0"/>
<dbReference type="STRING" id="32051.SynWH7803_1989"/>
<dbReference type="KEGG" id="syx:SynWH7803_1989"/>
<dbReference type="eggNOG" id="ENOG5032RMS">
    <property type="taxonomic scope" value="Bacteria"/>
</dbReference>
<dbReference type="HOGENOM" id="CLU_175526_0_0_3"/>
<dbReference type="OrthoDB" id="463386at2"/>
<dbReference type="Proteomes" id="UP000001566">
    <property type="component" value="Chromosome"/>
</dbReference>
<dbReference type="GO" id="GO:0000428">
    <property type="term" value="C:DNA-directed RNA polymerase complex"/>
    <property type="evidence" value="ECO:0007669"/>
    <property type="project" value="UniProtKB-KW"/>
</dbReference>
<dbReference type="GO" id="GO:0003677">
    <property type="term" value="F:DNA binding"/>
    <property type="evidence" value="ECO:0007669"/>
    <property type="project" value="UniProtKB-UniRule"/>
</dbReference>
<dbReference type="GO" id="GO:0003899">
    <property type="term" value="F:DNA-directed RNA polymerase activity"/>
    <property type="evidence" value="ECO:0007669"/>
    <property type="project" value="UniProtKB-UniRule"/>
</dbReference>
<dbReference type="GO" id="GO:0006351">
    <property type="term" value="P:DNA-templated transcription"/>
    <property type="evidence" value="ECO:0007669"/>
    <property type="project" value="UniProtKB-UniRule"/>
</dbReference>
<dbReference type="HAMAP" id="MF_00366">
    <property type="entry name" value="RNApol_bact_RpoZ"/>
    <property type="match status" value="1"/>
</dbReference>
<dbReference type="InterPro" id="IPR003716">
    <property type="entry name" value="DNA-dir_RNA_pol_omega"/>
</dbReference>
<dbReference type="InterPro" id="IPR006110">
    <property type="entry name" value="Pol_omega/Rpo6/RPB6"/>
</dbReference>
<dbReference type="NCBIfam" id="NF001574">
    <property type="entry name" value="PRK00392.2-5"/>
    <property type="match status" value="1"/>
</dbReference>
<dbReference type="Pfam" id="PF01192">
    <property type="entry name" value="RNA_pol_Rpb6"/>
    <property type="match status" value="1"/>
</dbReference>
<proteinExistence type="inferred from homology"/>
<reference key="1">
    <citation type="submission" date="2006-05" db="EMBL/GenBank/DDBJ databases">
        <authorList>
            <consortium name="Genoscope"/>
        </authorList>
    </citation>
    <scope>NUCLEOTIDE SEQUENCE [LARGE SCALE GENOMIC DNA]</scope>
    <source>
        <strain>WH7803</strain>
    </source>
</reference>
<name>RPOZ_SYNPW</name>
<comment type="function">
    <text evidence="1">Promotes RNA polymerase assembly. Latches the N- and C-terminal regions of the beta' subunit thereby facilitating its interaction with the beta and alpha subunits.</text>
</comment>
<comment type="catalytic activity">
    <reaction evidence="1">
        <text>RNA(n) + a ribonucleoside 5'-triphosphate = RNA(n+1) + diphosphate</text>
        <dbReference type="Rhea" id="RHEA:21248"/>
        <dbReference type="Rhea" id="RHEA-COMP:14527"/>
        <dbReference type="Rhea" id="RHEA-COMP:17342"/>
        <dbReference type="ChEBI" id="CHEBI:33019"/>
        <dbReference type="ChEBI" id="CHEBI:61557"/>
        <dbReference type="ChEBI" id="CHEBI:140395"/>
        <dbReference type="EC" id="2.7.7.6"/>
    </reaction>
</comment>
<comment type="subunit">
    <text evidence="1">In cyanobacteria the RNAP catalytic core is composed of 2 alpha, 1 beta, 1 beta', 1 gamma and 1 omega subunit. When a sigma factor is associated with the core the holoenzyme is formed, which can initiate transcription.</text>
</comment>
<comment type="similarity">
    <text evidence="1">Belongs to the RNA polymerase subunit omega family.</text>
</comment>